<accession>Q9KH71</accession>
<dbReference type="EC" id="2.7.1.90" evidence="1"/>
<dbReference type="EMBL" id="AF268276">
    <property type="protein sequence ID" value="AAF80100.1"/>
    <property type="molecule type" value="Genomic_DNA"/>
</dbReference>
<dbReference type="RefSeq" id="WP_149122912.1">
    <property type="nucleotide sequence ID" value="NZ_JAOAAT010000002.1"/>
</dbReference>
<dbReference type="SMR" id="Q9KH71"/>
<dbReference type="SABIO-RK" id="Q9KH71"/>
<dbReference type="UniPathway" id="UPA00109">
    <property type="reaction ID" value="UER00182"/>
</dbReference>
<dbReference type="GO" id="GO:0005945">
    <property type="term" value="C:6-phosphofructokinase complex"/>
    <property type="evidence" value="ECO:0007669"/>
    <property type="project" value="TreeGrafter"/>
</dbReference>
<dbReference type="GO" id="GO:0003872">
    <property type="term" value="F:6-phosphofructokinase activity"/>
    <property type="evidence" value="ECO:0007669"/>
    <property type="project" value="UniProtKB-UniRule"/>
</dbReference>
<dbReference type="GO" id="GO:0016208">
    <property type="term" value="F:AMP binding"/>
    <property type="evidence" value="ECO:0007669"/>
    <property type="project" value="TreeGrafter"/>
</dbReference>
<dbReference type="GO" id="GO:0005524">
    <property type="term" value="F:ATP binding"/>
    <property type="evidence" value="ECO:0007669"/>
    <property type="project" value="InterPro"/>
</dbReference>
<dbReference type="GO" id="GO:0047334">
    <property type="term" value="F:diphosphate-fructose-6-phosphate 1-phosphotransferase activity"/>
    <property type="evidence" value="ECO:0007669"/>
    <property type="project" value="UniProtKB-EC"/>
</dbReference>
<dbReference type="GO" id="GO:0070095">
    <property type="term" value="F:fructose-6-phosphate binding"/>
    <property type="evidence" value="ECO:0007669"/>
    <property type="project" value="TreeGrafter"/>
</dbReference>
<dbReference type="GO" id="GO:0042802">
    <property type="term" value="F:identical protein binding"/>
    <property type="evidence" value="ECO:0007669"/>
    <property type="project" value="TreeGrafter"/>
</dbReference>
<dbReference type="GO" id="GO:0046872">
    <property type="term" value="F:metal ion binding"/>
    <property type="evidence" value="ECO:0007669"/>
    <property type="project" value="UniProtKB-KW"/>
</dbReference>
<dbReference type="GO" id="GO:0048029">
    <property type="term" value="F:monosaccharide binding"/>
    <property type="evidence" value="ECO:0007669"/>
    <property type="project" value="TreeGrafter"/>
</dbReference>
<dbReference type="GO" id="GO:0061621">
    <property type="term" value="P:canonical glycolysis"/>
    <property type="evidence" value="ECO:0007669"/>
    <property type="project" value="TreeGrafter"/>
</dbReference>
<dbReference type="GO" id="GO:0030388">
    <property type="term" value="P:fructose 1,6-bisphosphate metabolic process"/>
    <property type="evidence" value="ECO:0007669"/>
    <property type="project" value="TreeGrafter"/>
</dbReference>
<dbReference type="GO" id="GO:0006002">
    <property type="term" value="P:fructose 6-phosphate metabolic process"/>
    <property type="evidence" value="ECO:0007669"/>
    <property type="project" value="InterPro"/>
</dbReference>
<dbReference type="FunFam" id="3.40.50.460:FF:000024">
    <property type="entry name" value="Pyrophosphate--fructose 6-phosphate 1-phosphotransferase"/>
    <property type="match status" value="1"/>
</dbReference>
<dbReference type="Gene3D" id="3.40.50.450">
    <property type="match status" value="1"/>
</dbReference>
<dbReference type="Gene3D" id="3.40.50.460">
    <property type="entry name" value="Phosphofructokinase domain"/>
    <property type="match status" value="1"/>
</dbReference>
<dbReference type="HAMAP" id="MF_01976">
    <property type="entry name" value="Phosphofructokinase_III"/>
    <property type="match status" value="1"/>
</dbReference>
<dbReference type="InterPro" id="IPR022953">
    <property type="entry name" value="ATP_PFK"/>
</dbReference>
<dbReference type="InterPro" id="IPR012003">
    <property type="entry name" value="ATP_PFK_prok-type"/>
</dbReference>
<dbReference type="InterPro" id="IPR015912">
    <property type="entry name" value="Phosphofructokinase_CS"/>
</dbReference>
<dbReference type="InterPro" id="IPR000023">
    <property type="entry name" value="Phosphofructokinase_dom"/>
</dbReference>
<dbReference type="InterPro" id="IPR012829">
    <property type="entry name" value="Phosphofructokinase_III"/>
</dbReference>
<dbReference type="InterPro" id="IPR035966">
    <property type="entry name" value="PKF_sf"/>
</dbReference>
<dbReference type="NCBIfam" id="TIGR02483">
    <property type="entry name" value="PFK_mixed"/>
    <property type="match status" value="1"/>
</dbReference>
<dbReference type="NCBIfam" id="NF002872">
    <property type="entry name" value="PRK03202.1"/>
    <property type="match status" value="1"/>
</dbReference>
<dbReference type="PANTHER" id="PTHR13697:SF52">
    <property type="entry name" value="ATP-DEPENDENT 6-PHOSPHOFRUCTOKINASE 3"/>
    <property type="match status" value="1"/>
</dbReference>
<dbReference type="PANTHER" id="PTHR13697">
    <property type="entry name" value="PHOSPHOFRUCTOKINASE"/>
    <property type="match status" value="1"/>
</dbReference>
<dbReference type="Pfam" id="PF00365">
    <property type="entry name" value="PFK"/>
    <property type="match status" value="1"/>
</dbReference>
<dbReference type="PIRSF" id="PIRSF000532">
    <property type="entry name" value="ATP_PFK_prok"/>
    <property type="match status" value="1"/>
</dbReference>
<dbReference type="PRINTS" id="PR00476">
    <property type="entry name" value="PHFRCTKINASE"/>
</dbReference>
<dbReference type="SUPFAM" id="SSF53784">
    <property type="entry name" value="Phosphofructokinase"/>
    <property type="match status" value="1"/>
</dbReference>
<dbReference type="PROSITE" id="PS00433">
    <property type="entry name" value="PHOSPHOFRUCTOKINASE"/>
    <property type="match status" value="1"/>
</dbReference>
<feature type="initiator methionine" description="Removed" evidence="2">
    <location>
        <position position="1"/>
    </location>
</feature>
<feature type="chain" id="PRO_0000112012" description="Pyrophosphate--fructose 6-phosphate 1-phosphotransferase">
    <location>
        <begin position="2"/>
        <end position="346"/>
    </location>
</feature>
<feature type="active site" description="Proton acceptor" evidence="1">
    <location>
        <position position="129"/>
    </location>
</feature>
<feature type="binding site" evidence="1">
    <location>
        <position position="13"/>
    </location>
    <ligand>
        <name>diphosphate</name>
        <dbReference type="ChEBI" id="CHEBI:33019"/>
    </ligand>
</feature>
<feature type="binding site" evidence="1">
    <location>
        <position position="105"/>
    </location>
    <ligand>
        <name>Mg(2+)</name>
        <dbReference type="ChEBI" id="CHEBI:18420"/>
        <note>catalytic</note>
    </ligand>
</feature>
<feature type="binding site" description="in other chain" evidence="1">
    <location>
        <begin position="127"/>
        <end position="129"/>
    </location>
    <ligand>
        <name>substrate</name>
        <note>ligand shared between dimeric partners</note>
    </ligand>
</feature>
<feature type="binding site" evidence="1">
    <location>
        <position position="164"/>
    </location>
    <ligand>
        <name>substrate</name>
        <note>ligand shared between dimeric partners</note>
    </ligand>
</feature>
<feature type="binding site" description="in other chain" evidence="1">
    <location>
        <begin position="171"/>
        <end position="173"/>
    </location>
    <ligand>
        <name>substrate</name>
        <note>ligand shared between dimeric partners</note>
    </ligand>
</feature>
<feature type="binding site" description="in other chain" evidence="1">
    <location>
        <position position="224"/>
    </location>
    <ligand>
        <name>substrate</name>
        <note>ligand shared between dimeric partners</note>
    </ligand>
</feature>
<feature type="binding site" evidence="1">
    <location>
        <position position="269"/>
    </location>
    <ligand>
        <name>substrate</name>
        <note>ligand shared between dimeric partners</note>
    </ligand>
</feature>
<feature type="binding site" description="in other chain" evidence="1">
    <location>
        <begin position="275"/>
        <end position="278"/>
    </location>
    <ligand>
        <name>substrate</name>
        <note>ligand shared between dimeric partners</note>
    </ligand>
</feature>
<feature type="site" description="Important for catalytic activity and substrate specificity; stabilizes the transition state when the phosphoryl donor is PPi; prevents ATP from binding by mimicking the alpha-phosphate group of ATP" evidence="1">
    <location>
        <position position="106"/>
    </location>
</feature>
<feature type="site" description="Important for catalytic activity; stabilizes the transition state when the phosphoryl donor is PPi" evidence="1">
    <location>
        <position position="126"/>
    </location>
</feature>
<protein>
    <recommendedName>
        <fullName evidence="1">Pyrophosphate--fructose 6-phosphate 1-phosphotransferase</fullName>
        <ecNumber evidence="1">2.7.1.90</ecNumber>
    </recommendedName>
    <alternativeName>
        <fullName evidence="1">6-phosphofructokinase, pyrophosphate dependent</fullName>
    </alternativeName>
    <alternativeName>
        <fullName evidence="1">PPi-dependent phosphofructokinase</fullName>
        <shortName evidence="1">PPi-PFK</shortName>
    </alternativeName>
    <alternativeName>
        <fullName evidence="1">Pyrophosphate-dependent 6-phosphofructose-1-kinase</fullName>
    </alternativeName>
</protein>
<evidence type="ECO:0000255" key="1">
    <source>
        <dbReference type="HAMAP-Rule" id="MF_01976"/>
    </source>
</evidence>
<evidence type="ECO:0000269" key="2">
    <source>
    </source>
</evidence>
<name>PFP_DICTH</name>
<keyword id="KW-0963">Cytoplasm</keyword>
<keyword id="KW-0903">Direct protein sequencing</keyword>
<keyword id="KW-0324">Glycolysis</keyword>
<keyword id="KW-0418">Kinase</keyword>
<keyword id="KW-0460">Magnesium</keyword>
<keyword id="KW-0479">Metal-binding</keyword>
<keyword id="KW-0808">Transferase</keyword>
<organism>
    <name type="scientific">Dictyoglomus thermophilum</name>
    <dbReference type="NCBI Taxonomy" id="14"/>
    <lineage>
        <taxon>Bacteria</taxon>
        <taxon>Pseudomonadati</taxon>
        <taxon>Dictyoglomota</taxon>
        <taxon>Dictyoglomia</taxon>
        <taxon>Dictyoglomales</taxon>
        <taxon>Dictyoglomaceae</taxon>
        <taxon>Dictyoglomus</taxon>
    </lineage>
</organism>
<reference key="1">
    <citation type="journal article" date="2000" name="J. Bacteriol.">
        <title>Sequencing, cloning, and high-level expression of the pfp gene, encoding a ppi-dependent phosphofructokinase from the extremely thermophilic eubacterium Dictyoglomus thermophilum.</title>
        <authorList>
            <person name="Ding Y.-H.R."/>
            <person name="Ronimus R.S."/>
            <person name="Morgan H.W."/>
        </authorList>
    </citation>
    <scope>NUCLEOTIDE SEQUENCE [GENOMIC DNA]</scope>
    <source>
        <strain>Rt46 B.1</strain>
    </source>
</reference>
<reference key="2">
    <citation type="journal article" date="1999" name="Extremophiles">
        <title>Purification and properties of the pyrophosphate-dependent phosphofructokinase from Dictyoglomus thermophilum Rt46 B.1.</title>
        <authorList>
            <person name="Ding Y.H."/>
            <person name="Ronimus R.S."/>
            <person name="Morgan H.W."/>
        </authorList>
    </citation>
    <scope>PROTEIN SEQUENCE OF 2-22</scope>
    <scope>FUNCTION</scope>
    <scope>SUBUNIT</scope>
    <scope>BIOPHYSICOCHEMICAL PROPERTIES</scope>
    <scope>COFACTOR</scope>
    <scope>ACTIVITY REGULATION</scope>
    <source>
        <strain>Rt46 B.1</strain>
    </source>
</reference>
<sequence>MSKMRIGVLTGGGDCPGLNPAIRGIVMRALDYGDEVIGLKYGWAGLLKADTMPLSLEMVEDILEIGGTILGSSRTNPFKKEEDVQKCVENFKKLNLDALIAIGGEDTLGVASKFSKLGLPMIGVPKTIDKDLEETDYTLGFDTAVEVVVDAIKRLRDTARSHARVIVVEIMGRHAGWLALYGGLAGGADYILIPEVEPNLEDLYNHIRKLYARGRNHAVVAIAEGVQLPGFTYQKGQEGMVDAFGHIRLGGVGNVLAEEIQKNLGIETRAVILSHLQRGGSPSIRDRIMGLLLGKKAVDLVHEGKSGLFVAVKGNELVPVDITLIEGKTKNVDPAFYESVKTFFNK</sequence>
<comment type="function">
    <text evidence="1 2">Catalyzes the phosphorylation of D-fructose 6-phosphate, the first committing step of glycolysis. Uses inorganic phosphate (PPi) as phosphoryl donor instead of ATP like common ATP-dependent phosphofructokinases (ATP-PFKs), which renders the reaction reversible, and can thus function both in glycolysis and gluconeogenesis. Consistently, PPi-PFK can replace the enzymes of both the forward (ATP-PFK) and reverse (fructose-bisphosphatase (FBPase)) reactions.</text>
</comment>
<comment type="catalytic activity">
    <reaction evidence="1">
        <text>beta-D-fructose 6-phosphate + diphosphate = beta-D-fructose 1,6-bisphosphate + phosphate + H(+)</text>
        <dbReference type="Rhea" id="RHEA:13613"/>
        <dbReference type="ChEBI" id="CHEBI:15378"/>
        <dbReference type="ChEBI" id="CHEBI:32966"/>
        <dbReference type="ChEBI" id="CHEBI:33019"/>
        <dbReference type="ChEBI" id="CHEBI:43474"/>
        <dbReference type="ChEBI" id="CHEBI:57634"/>
        <dbReference type="EC" id="2.7.1.90"/>
    </reaction>
</comment>
<comment type="cofactor">
    <cofactor evidence="1 2">
        <name>Mg(2+)</name>
        <dbReference type="ChEBI" id="CHEBI:18420"/>
    </cofactor>
</comment>
<comment type="activity regulation">
    <text evidence="1 2">Non-allosteric.</text>
</comment>
<comment type="biophysicochemical properties">
    <kinetics>
        <KM evidence="2">4.3 mM for phosphate</KM>
        <KM evidence="2">0.022 mM for diphosphate</KM>
        <KM evidence="2">0.22 mM for tripolyphosphate</KM>
        <KM evidence="2">0.228 mM for fructose 6-phosphate</KM>
        <KM evidence="2">2.9 mM for fructose 1,6-bisphosphate</KM>
        <Vmax evidence="2">4.62 umol/min/mg enzyme for the forward reaction</Vmax>
        <Vmax evidence="2">0.15 umol/min/mg enzyme for the reverse reaction</Vmax>
    </kinetics>
    <phDependence>
        <text evidence="2">Optimum pH is 5.7-6.3 for the forward reaction and 7.0-7.5 for the reverse reaction.</text>
    </phDependence>
</comment>
<comment type="pathway">
    <text evidence="1">Carbohydrate degradation; glycolysis; D-glyceraldehyde 3-phosphate and glycerone phosphate from D-glucose: step 3/4.</text>
</comment>
<comment type="subunit">
    <text evidence="2">Homodimer.</text>
</comment>
<comment type="subcellular location">
    <subcellularLocation>
        <location evidence="1">Cytoplasm</location>
    </subcellularLocation>
</comment>
<comment type="similarity">
    <text evidence="1">Belongs to the phosphofructokinase type A (PFKA) family. Mixed-substrate PFK group III subfamily.</text>
</comment>
<gene>
    <name evidence="1" type="primary">pfp</name>
</gene>
<proteinExistence type="evidence at protein level"/>